<accession>C0HM86</accession>
<comment type="subcellular location">
    <subcellularLocation>
        <location evidence="1">Secreted</location>
        <location evidence="1">Extracellular space</location>
        <location evidence="1">Extracellular matrix</location>
    </subcellularLocation>
</comment>
<comment type="similarity">
    <text evidence="1">Belongs to the fibrillar collagen family.</text>
</comment>
<reference evidence="4" key="1">
    <citation type="submission" date="2023-05" db="UniProtKB">
        <title>Grouping groupers in the Mediterranean: ecological baselines revealed by ancient proteins.</title>
        <authorList>
            <person name="Winter R.M."/>
            <person name="de Kock W."/>
            <person name="Mackie M."/>
            <person name="Ramsoe M."/>
            <person name="Desidera E."/>
            <person name="Collins M."/>
            <person name="Guidetti P."/>
            <person name="Presslee S."/>
            <person name="Munoz-Alegre M."/>
            <person name="Oueslati T."/>
            <person name="Morales-Muniz A."/>
            <person name="Michailidis D."/>
            <person name="van den Hurk Y."/>
            <person name="Taurozzi A.J."/>
            <person name="Cakirlar C."/>
        </authorList>
    </citation>
    <scope>PROTEIN SEQUENCE</scope>
    <scope>IDENTIFICATION BY MASS SPECTROMETRY</scope>
</reference>
<keyword id="KW-0176">Collagen</keyword>
<keyword id="KW-0903">Direct protein sequencing</keyword>
<keyword id="KW-0272">Extracellular matrix</keyword>
<keyword id="KW-0964">Secreted</keyword>
<feature type="chain" id="PRO_0000459600" description="Collagen, type I, alpha 1b">
    <location>
        <begin position="1"/>
        <end position="1010"/>
    </location>
</feature>
<feature type="domain" description="Fibrillar collagen NC1" evidence="1">
    <location>
        <begin position="982"/>
        <end position="1010"/>
    </location>
</feature>
<feature type="region of interest" description="Disordered" evidence="2">
    <location>
        <begin position="1"/>
        <end position="969"/>
    </location>
</feature>
<feature type="compositionally biased region" description="Pro residues" evidence="2">
    <location>
        <begin position="1"/>
        <end position="24"/>
    </location>
</feature>
<feature type="compositionally biased region" description="Low complexity" evidence="2">
    <location>
        <begin position="25"/>
        <end position="48"/>
    </location>
</feature>
<feature type="compositionally biased region" description="Basic and acidic residues" evidence="2">
    <location>
        <begin position="58"/>
        <end position="72"/>
    </location>
</feature>
<feature type="compositionally biased region" description="Low complexity" evidence="2">
    <location>
        <begin position="73"/>
        <end position="82"/>
    </location>
</feature>
<feature type="compositionally biased region" description="Pro residues" evidence="2">
    <location>
        <begin position="145"/>
        <end position="159"/>
    </location>
</feature>
<feature type="compositionally biased region" description="Gly residues" evidence="2">
    <location>
        <begin position="160"/>
        <end position="179"/>
    </location>
</feature>
<feature type="compositionally biased region" description="Gly residues" evidence="2">
    <location>
        <begin position="203"/>
        <end position="212"/>
    </location>
</feature>
<feature type="compositionally biased region" description="Low complexity" evidence="2">
    <location>
        <begin position="213"/>
        <end position="268"/>
    </location>
</feature>
<feature type="compositionally biased region" description="Low complexity" evidence="2">
    <location>
        <begin position="300"/>
        <end position="310"/>
    </location>
</feature>
<feature type="compositionally biased region" description="Gly residues" evidence="2">
    <location>
        <begin position="311"/>
        <end position="323"/>
    </location>
</feature>
<feature type="compositionally biased region" description="Low complexity" evidence="2">
    <location>
        <begin position="324"/>
        <end position="343"/>
    </location>
</feature>
<feature type="compositionally biased region" description="Low complexity" evidence="2">
    <location>
        <begin position="405"/>
        <end position="448"/>
    </location>
</feature>
<feature type="compositionally biased region" description="Gly residues" evidence="2">
    <location>
        <begin position="468"/>
        <end position="477"/>
    </location>
</feature>
<feature type="compositionally biased region" description="Gly residues" evidence="2">
    <location>
        <begin position="486"/>
        <end position="495"/>
    </location>
</feature>
<feature type="compositionally biased region" description="Gly residues" evidence="2">
    <location>
        <begin position="519"/>
        <end position="528"/>
    </location>
</feature>
<feature type="compositionally biased region" description="Low complexity" evidence="2">
    <location>
        <begin position="559"/>
        <end position="568"/>
    </location>
</feature>
<feature type="compositionally biased region" description="Low complexity" evidence="2">
    <location>
        <begin position="581"/>
        <end position="596"/>
    </location>
</feature>
<feature type="compositionally biased region" description="Gly residues" evidence="2">
    <location>
        <begin position="609"/>
        <end position="618"/>
    </location>
</feature>
<feature type="compositionally biased region" description="Gly residues" evidence="2">
    <location>
        <begin position="633"/>
        <end position="642"/>
    </location>
</feature>
<feature type="compositionally biased region" description="Low complexity" evidence="2">
    <location>
        <begin position="643"/>
        <end position="662"/>
    </location>
</feature>
<feature type="compositionally biased region" description="Low complexity" evidence="2">
    <location>
        <begin position="679"/>
        <end position="701"/>
    </location>
</feature>
<feature type="compositionally biased region" description="Low complexity" evidence="2">
    <location>
        <begin position="796"/>
        <end position="805"/>
    </location>
</feature>
<feature type="compositionally biased region" description="Basic and acidic residues" evidence="2">
    <location>
        <begin position="834"/>
        <end position="847"/>
    </location>
</feature>
<feature type="compositionally biased region" description="Low complexity" evidence="2">
    <location>
        <begin position="872"/>
        <end position="900"/>
    </location>
</feature>
<feature type="compositionally biased region" description="Pro residues" evidence="2">
    <location>
        <begin position="918"/>
        <end position="933"/>
    </location>
</feature>
<feature type="non-consecutive residues" evidence="3">
    <location>
        <begin position="82"/>
        <end position="83"/>
    </location>
</feature>
<feature type="non-consecutive residues" evidence="3">
    <location>
        <begin position="325"/>
        <end position="326"/>
    </location>
</feature>
<feature type="non-consecutive residues" evidence="3">
    <location>
        <begin position="436"/>
        <end position="437"/>
    </location>
</feature>
<feature type="non-consecutive residues" evidence="3">
    <location>
        <begin position="479"/>
        <end position="480"/>
    </location>
</feature>
<feature type="non-consecutive residues" evidence="3">
    <location>
        <begin position="677"/>
        <end position="678"/>
    </location>
</feature>
<feature type="non-consecutive residues" evidence="3">
    <location>
        <begin position="701"/>
        <end position="702"/>
    </location>
</feature>
<feature type="non-consecutive residues" evidence="3">
    <location>
        <begin position="828"/>
        <end position="829"/>
    </location>
</feature>
<feature type="non-consecutive residues" evidence="3">
    <location>
        <begin position="958"/>
        <end position="959"/>
    </location>
</feature>
<feature type="non-consecutive residues" evidence="3">
    <location>
        <begin position="969"/>
        <end position="970"/>
    </location>
</feature>
<feature type="non-consecutive residues" evidence="3">
    <location>
        <begin position="982"/>
        <end position="983"/>
    </location>
</feature>
<feature type="non-terminal residue" evidence="3">
    <location>
        <position position="1"/>
    </location>
</feature>
<sequence>SSGPPQPGPMGPMGPRGPPGPPGSSGPQGFTGPPGEPGEPGASGAMGSRGPSGPPGKNGDDGEPGKPGRPGERGAAGPQGARGFSGLDGAKGDAGPAGPKGESGAPGENGVPGVMGARGLPGERGRPGPPGPSGARGNDGNTGPGGPPGPTGPAGPPGFPGGAGVKGETGPAGGRGNEGPQGARGEPGNPGPAGPAGPAGSPGTDGGPGAKGSPGAAGLAGAPGFPGARGPAGAQGAVGAPGPKGNNGDPGASGPKGEPGAKGEPGPAGVQGLSGPSGEEGKRGARGEPGGAGPRGPPGERGAPGARGFPGADGGAGGKGAPGERGATGESGSPGAPGAPGSKGVTGSPGSPGPDGKTGPAGVAGQDGRPGPPGSAGARGQPGVMGFPGPKGPAGESGKPGERGPAGATGPVGAPGKXGDVGAPGPSGVAGPAGEKTGKPGEQGAPGEAGPPGPSGPRGDRGFPGERGAPGLGGPTGARGEPGAAGAPGGLGAPGMQGMPGERGASGLPGAKGERGDAGGKGGDGAPGKDGARGXTGALGVPGPHGAQGEKGEGGAVGVAGPTGPRGAPGERGETGPPGPAGFAGPPGADGQPGAKGETGDSGPKGDAGAPGPGGPVGAAGPQGPAGPTGPKGARGGAGPPGATGFPGPAGRVGPSGPAGAAGPPGPVGPVGKDGARGETGAAGRPGEAGAAGAPGPSGEKGLVGLPGQRGERGFSGLPGPSGEPGKQGPSGPVGERGPPGPSGPPGLSGAPGEAGREGSQGHDGAPGRDGSAGPKGDRGESGMAGPPGPPGAPGAPGAVGPSGKSGDRGETGPAGPAGPSGPAGVRGGPAGAKGDRGEAGEAGDRGHKGHRGFTGMQGLPGPAGAHGERGPAGASGPAGPRGPAGSNGAAGKDGMNGLPGPLGPPGPRGRNGEMGPAGPPGPPGPAGPPGPPGSGFDFVSQPLQEEAPDPFRGGHYRSPDGTQKSPARALLLGGSNDVELRLPLLDLAPMDVGAPDQEFGVEVGPVCFL</sequence>
<protein>
    <recommendedName>
        <fullName evidence="4">Collagen, type I, alpha 1b</fullName>
        <shortName evidence="4">col1a1b</shortName>
    </recommendedName>
    <alternativeName>
        <fullName evidence="4">Alpha-1 type I collagen</fullName>
    </alternativeName>
</protein>
<evidence type="ECO:0000255" key="1">
    <source>
        <dbReference type="PROSITE-ProRule" id="PRU00793"/>
    </source>
</evidence>
<evidence type="ECO:0000256" key="2">
    <source>
        <dbReference type="SAM" id="MobiDB-lite"/>
    </source>
</evidence>
<evidence type="ECO:0000303" key="3">
    <source ref="1"/>
</evidence>
<evidence type="ECO:0000305" key="4"/>
<proteinExistence type="evidence at protein level"/>
<name>CO1AB_EPIMA</name>
<dbReference type="GO" id="GO:0005581">
    <property type="term" value="C:collagen trimer"/>
    <property type="evidence" value="ECO:0007669"/>
    <property type="project" value="UniProtKB-KW"/>
</dbReference>
<dbReference type="GO" id="GO:0005737">
    <property type="term" value="C:cytoplasm"/>
    <property type="evidence" value="ECO:0007669"/>
    <property type="project" value="TreeGrafter"/>
</dbReference>
<dbReference type="GO" id="GO:0031012">
    <property type="term" value="C:extracellular matrix"/>
    <property type="evidence" value="ECO:0007669"/>
    <property type="project" value="TreeGrafter"/>
</dbReference>
<dbReference type="GO" id="GO:0005615">
    <property type="term" value="C:extracellular space"/>
    <property type="evidence" value="ECO:0007669"/>
    <property type="project" value="TreeGrafter"/>
</dbReference>
<dbReference type="GO" id="GO:0030020">
    <property type="term" value="F:extracellular matrix structural constituent conferring tensile strength"/>
    <property type="evidence" value="ECO:0007669"/>
    <property type="project" value="TreeGrafter"/>
</dbReference>
<dbReference type="GO" id="GO:0030198">
    <property type="term" value="P:extracellular matrix organization"/>
    <property type="evidence" value="ECO:0007669"/>
    <property type="project" value="TreeGrafter"/>
</dbReference>
<dbReference type="GO" id="GO:0001501">
    <property type="term" value="P:skeletal system development"/>
    <property type="evidence" value="ECO:0007669"/>
    <property type="project" value="TreeGrafter"/>
</dbReference>
<dbReference type="Gene3D" id="2.60.120.1000">
    <property type="match status" value="1"/>
</dbReference>
<dbReference type="InterPro" id="IPR008160">
    <property type="entry name" value="Collagen"/>
</dbReference>
<dbReference type="InterPro" id="IPR050149">
    <property type="entry name" value="Collagen_superfamily"/>
</dbReference>
<dbReference type="InterPro" id="IPR000885">
    <property type="entry name" value="Fib_collagen_C"/>
</dbReference>
<dbReference type="PANTHER" id="PTHR24023">
    <property type="entry name" value="COLLAGEN ALPHA"/>
    <property type="match status" value="1"/>
</dbReference>
<dbReference type="PANTHER" id="PTHR24023:SF569">
    <property type="entry name" value="COLLAGEN ALPHA-1(I) CHAIN"/>
    <property type="match status" value="1"/>
</dbReference>
<dbReference type="Pfam" id="PF01410">
    <property type="entry name" value="COLFI"/>
    <property type="match status" value="1"/>
</dbReference>
<dbReference type="Pfam" id="PF01391">
    <property type="entry name" value="Collagen"/>
    <property type="match status" value="4"/>
</dbReference>
<organism evidence="3">
    <name type="scientific">Epinephelus marginatus</name>
    <name type="common">Dusky grouper</name>
    <dbReference type="NCBI Taxonomy" id="179535"/>
    <lineage>
        <taxon>Eukaryota</taxon>
        <taxon>Metazoa</taxon>
        <taxon>Chordata</taxon>
        <taxon>Craniata</taxon>
        <taxon>Vertebrata</taxon>
        <taxon>Euteleostomi</taxon>
        <taxon>Actinopterygii</taxon>
        <taxon>Neopterygii</taxon>
        <taxon>Teleostei</taxon>
        <taxon>Neoteleostei</taxon>
        <taxon>Acanthomorphata</taxon>
        <taxon>Eupercaria</taxon>
        <taxon>Perciformes</taxon>
        <taxon>Serranoidei</taxon>
        <taxon>Serranidae</taxon>
        <taxon>Epinephelinae</taxon>
        <taxon>Epinephelini</taxon>
        <taxon>Epinephelus</taxon>
    </lineage>
</organism>